<protein>
    <recommendedName>
        <fullName>Hydrogenase-1 operon protein HyaE</fullName>
    </recommendedName>
</protein>
<organism>
    <name type="scientific">Escherichia coli (strain K12)</name>
    <dbReference type="NCBI Taxonomy" id="83333"/>
    <lineage>
        <taxon>Bacteria</taxon>
        <taxon>Pseudomonadati</taxon>
        <taxon>Pseudomonadota</taxon>
        <taxon>Gammaproteobacteria</taxon>
        <taxon>Enterobacterales</taxon>
        <taxon>Enterobacteriaceae</taxon>
        <taxon>Escherichia</taxon>
    </lineage>
</organism>
<sequence length="132" mass="14890">MSNDTPFDALWQRMLARGWTPVSESRLDDWLTQAPDGVVLLSSDPKRTPEVSDNPVMIGELLREFPDYTWQVAIADLEQSEAIGDRFGVFRFPATLVFTGGNYRGVLNGIHPWAELINLMRGLVEPQQERAS</sequence>
<dbReference type="EMBL" id="M34825">
    <property type="protein sequence ID" value="AAA24001.1"/>
    <property type="molecule type" value="Genomic_DNA"/>
</dbReference>
<dbReference type="EMBL" id="U00096">
    <property type="protein sequence ID" value="AAC74061.1"/>
    <property type="molecule type" value="Genomic_DNA"/>
</dbReference>
<dbReference type="EMBL" id="AP009048">
    <property type="protein sequence ID" value="BAA35741.1"/>
    <property type="molecule type" value="Genomic_DNA"/>
</dbReference>
<dbReference type="PIR" id="JV0076">
    <property type="entry name" value="QQECHE"/>
</dbReference>
<dbReference type="RefSeq" id="NP_415495.1">
    <property type="nucleotide sequence ID" value="NC_000913.3"/>
</dbReference>
<dbReference type="RefSeq" id="WP_000063978.1">
    <property type="nucleotide sequence ID" value="NZ_LN832404.1"/>
</dbReference>
<dbReference type="PDB" id="2HFD">
    <property type="method" value="NMR"/>
    <property type="chains" value="A=1-132"/>
</dbReference>
<dbReference type="PDBsum" id="2HFD"/>
<dbReference type="BMRB" id="P19931"/>
<dbReference type="SMR" id="P19931"/>
<dbReference type="BioGRID" id="4260046">
    <property type="interactions" value="33"/>
</dbReference>
<dbReference type="DIP" id="DIP-9961N"/>
<dbReference type="FunCoup" id="P19931">
    <property type="interactions" value="85"/>
</dbReference>
<dbReference type="IntAct" id="P19931">
    <property type="interactions" value="11"/>
</dbReference>
<dbReference type="STRING" id="511145.b0976"/>
<dbReference type="jPOST" id="P19931"/>
<dbReference type="PaxDb" id="511145-b0976"/>
<dbReference type="EnsemblBacteria" id="AAC74061">
    <property type="protein sequence ID" value="AAC74061"/>
    <property type="gene ID" value="b0976"/>
</dbReference>
<dbReference type="GeneID" id="75171050"/>
<dbReference type="GeneID" id="945573"/>
<dbReference type="KEGG" id="ecj:JW0958"/>
<dbReference type="KEGG" id="eco:b0976"/>
<dbReference type="KEGG" id="ecoc:C3026_05955"/>
<dbReference type="PATRIC" id="fig|1411691.4.peg.1298"/>
<dbReference type="EchoBASE" id="EB0467"/>
<dbReference type="eggNOG" id="COG1999">
    <property type="taxonomic scope" value="Bacteria"/>
</dbReference>
<dbReference type="HOGENOM" id="CLU_144855_1_0_6"/>
<dbReference type="InParanoid" id="P19931"/>
<dbReference type="OMA" id="WHIAMAD"/>
<dbReference type="OrthoDB" id="6589267at2"/>
<dbReference type="PhylomeDB" id="P19931"/>
<dbReference type="BioCyc" id="EcoCyc:EG10472-MONOMER"/>
<dbReference type="EvolutionaryTrace" id="P19931"/>
<dbReference type="PRO" id="PR:P19931"/>
<dbReference type="Proteomes" id="UP000000625">
    <property type="component" value="Chromosome"/>
</dbReference>
<dbReference type="GO" id="GO:0005048">
    <property type="term" value="F:signal sequence binding"/>
    <property type="evidence" value="ECO:0000353"/>
    <property type="project" value="EcoCyc"/>
</dbReference>
<dbReference type="CDD" id="cd02965">
    <property type="entry name" value="HyaE"/>
    <property type="match status" value="1"/>
</dbReference>
<dbReference type="FunFam" id="3.40.30.10:FF:000098">
    <property type="entry name" value="Hydrogenase-1 operon protein hyaE"/>
    <property type="match status" value="1"/>
</dbReference>
<dbReference type="Gene3D" id="3.40.30.10">
    <property type="entry name" value="Glutaredoxin"/>
    <property type="match status" value="1"/>
</dbReference>
<dbReference type="InterPro" id="IPR010893">
    <property type="entry name" value="NiFe-hyd_mat_HyaE"/>
</dbReference>
<dbReference type="InterPro" id="IPR036249">
    <property type="entry name" value="Thioredoxin-like_sf"/>
</dbReference>
<dbReference type="NCBIfam" id="NF008563">
    <property type="entry name" value="PRK11509.1"/>
    <property type="match status" value="1"/>
</dbReference>
<dbReference type="Pfam" id="PF07449">
    <property type="entry name" value="HyaE"/>
    <property type="match status" value="1"/>
</dbReference>
<dbReference type="SUPFAM" id="SSF52833">
    <property type="entry name" value="Thioredoxin-like"/>
    <property type="match status" value="1"/>
</dbReference>
<accession>P19931</accession>
<keyword id="KW-0002">3D-structure</keyword>
<keyword id="KW-1185">Reference proteome</keyword>
<evidence type="ECO:0000305" key="1"/>
<evidence type="ECO:0007829" key="2">
    <source>
        <dbReference type="PDB" id="2HFD"/>
    </source>
</evidence>
<reference key="1">
    <citation type="journal article" date="1990" name="J. Bacteriol.">
        <title>Cloning and sequencing of a putative Escherichia coli [NiFe] hydrogenase-1 operon containing six open reading frames.</title>
        <authorList>
            <person name="Menon N.K."/>
            <person name="Robbins J."/>
            <person name="Peck H.D. Jr."/>
            <person name="Chatelus C.Y."/>
            <person name="Choi E.-S."/>
            <person name="Przybyla A.E."/>
        </authorList>
    </citation>
    <scope>NUCLEOTIDE SEQUENCE [GENOMIC DNA]</scope>
</reference>
<reference key="2">
    <citation type="journal article" date="1996" name="DNA Res.">
        <title>A 718-kb DNA sequence of the Escherichia coli K-12 genome corresponding to the 12.7-28.0 min region on the linkage map.</title>
        <authorList>
            <person name="Oshima T."/>
            <person name="Aiba H."/>
            <person name="Baba T."/>
            <person name="Fujita K."/>
            <person name="Hayashi K."/>
            <person name="Honjo A."/>
            <person name="Ikemoto K."/>
            <person name="Inada T."/>
            <person name="Itoh T."/>
            <person name="Kajihara M."/>
            <person name="Kanai K."/>
            <person name="Kashimoto K."/>
            <person name="Kimura S."/>
            <person name="Kitagawa M."/>
            <person name="Makino K."/>
            <person name="Masuda S."/>
            <person name="Miki T."/>
            <person name="Mizobuchi K."/>
            <person name="Mori H."/>
            <person name="Motomura K."/>
            <person name="Nakamura Y."/>
            <person name="Nashimoto H."/>
            <person name="Nishio Y."/>
            <person name="Saito N."/>
            <person name="Sampei G."/>
            <person name="Seki Y."/>
            <person name="Tagami H."/>
            <person name="Takemoto K."/>
            <person name="Wada C."/>
            <person name="Yamamoto Y."/>
            <person name="Yano M."/>
            <person name="Horiuchi T."/>
        </authorList>
    </citation>
    <scope>NUCLEOTIDE SEQUENCE [LARGE SCALE GENOMIC DNA]</scope>
    <source>
        <strain>K12 / W3110 / ATCC 27325 / DSM 5911</strain>
    </source>
</reference>
<reference key="3">
    <citation type="journal article" date="1997" name="Science">
        <title>The complete genome sequence of Escherichia coli K-12.</title>
        <authorList>
            <person name="Blattner F.R."/>
            <person name="Plunkett G. III"/>
            <person name="Bloch C.A."/>
            <person name="Perna N.T."/>
            <person name="Burland V."/>
            <person name="Riley M."/>
            <person name="Collado-Vides J."/>
            <person name="Glasner J.D."/>
            <person name="Rode C.K."/>
            <person name="Mayhew G.F."/>
            <person name="Gregor J."/>
            <person name="Davis N.W."/>
            <person name="Kirkpatrick H.A."/>
            <person name="Goeden M.A."/>
            <person name="Rose D.J."/>
            <person name="Mau B."/>
            <person name="Shao Y."/>
        </authorList>
    </citation>
    <scope>NUCLEOTIDE SEQUENCE [LARGE SCALE GENOMIC DNA]</scope>
    <source>
        <strain>K12 / MG1655 / ATCC 47076</strain>
    </source>
</reference>
<reference key="4">
    <citation type="journal article" date="2006" name="Mol. Syst. Biol.">
        <title>Highly accurate genome sequences of Escherichia coli K-12 strains MG1655 and W3110.</title>
        <authorList>
            <person name="Hayashi K."/>
            <person name="Morooka N."/>
            <person name="Yamamoto Y."/>
            <person name="Fujita K."/>
            <person name="Isono K."/>
            <person name="Choi S."/>
            <person name="Ohtsubo E."/>
            <person name="Baba T."/>
            <person name="Wanner B.L."/>
            <person name="Mori H."/>
            <person name="Horiuchi T."/>
        </authorList>
    </citation>
    <scope>NUCLEOTIDE SEQUENCE [LARGE SCALE GENOMIC DNA]</scope>
    <source>
        <strain>K12 / W3110 / ATCC 27325 / DSM 5911</strain>
    </source>
</reference>
<comment type="function">
    <text>Not known. Could form, along with HyaD, a complex involved in the processing of the hydrogenase 1 structural operon.</text>
</comment>
<comment type="similarity">
    <text evidence="1">Belongs to the HupG/HyaE family.</text>
</comment>
<proteinExistence type="evidence at protein level"/>
<name>HYAE_ECOLI</name>
<gene>
    <name type="primary">hyaE</name>
    <name type="ordered locus">b0976</name>
    <name type="ordered locus">JW0958</name>
</gene>
<feature type="chain" id="PRO_0000201414" description="Hydrogenase-1 operon protein HyaE">
    <location>
        <begin position="1"/>
        <end position="132"/>
    </location>
</feature>
<feature type="helix" evidence="2">
    <location>
        <begin position="6"/>
        <end position="15"/>
    </location>
</feature>
<feature type="turn" evidence="2">
    <location>
        <begin position="16"/>
        <end position="18"/>
    </location>
</feature>
<feature type="strand" evidence="2">
    <location>
        <begin position="20"/>
        <end position="22"/>
    </location>
</feature>
<feature type="helix" evidence="2">
    <location>
        <begin position="24"/>
        <end position="33"/>
    </location>
</feature>
<feature type="strand" evidence="2">
    <location>
        <begin position="35"/>
        <end position="41"/>
    </location>
</feature>
<feature type="strand" evidence="2">
    <location>
        <begin position="49"/>
        <end position="52"/>
    </location>
</feature>
<feature type="helix" evidence="2">
    <location>
        <begin position="56"/>
        <end position="62"/>
    </location>
</feature>
<feature type="strand" evidence="2">
    <location>
        <begin position="70"/>
        <end position="75"/>
    </location>
</feature>
<feature type="helix" evidence="2">
    <location>
        <begin position="77"/>
        <end position="87"/>
    </location>
</feature>
<feature type="strand" evidence="2">
    <location>
        <begin position="94"/>
        <end position="99"/>
    </location>
</feature>
<feature type="strand" evidence="2">
    <location>
        <begin position="102"/>
        <end position="107"/>
    </location>
</feature>
<feature type="helix" evidence="2">
    <location>
        <begin position="113"/>
        <end position="124"/>
    </location>
</feature>